<evidence type="ECO:0000250" key="1"/>
<evidence type="ECO:0000250" key="2">
    <source>
        <dbReference type="UniProtKB" id="P68137"/>
    </source>
</evidence>
<evidence type="ECO:0000305" key="3"/>
<proteinExistence type="inferred from homology"/>
<name>ACT8_XENLA</name>
<sequence>MAEEEIAALVIDNGSGMCKAGFAGDDAPRAVFPSIVGRPRHQGVMVGMGQKDSYVGDEAQSKRGILTLKYPIEHGIVTNWDDMEKIWHHTFYNELRVAPEEHPVLLTEAPLNPKANREKMTQIMFETFNTPAMYVAIQAVLSLYASGRTTGIVMDSGDGVTHTVPIYEGYALPHAILRLDLAGRDLTDYLMKILTERGYSFTTTAEREIVRDIKEKPCYVALDFEQEMATAASSSSLEKSYELPDGQVITIGNERFRCPEALFQPSFLGMESCGIHETTFNSIMKCDVDIRKDLYANTVLSGGTTMYPGIADRMQKEITALAPSTMKIKIIAPPERKYSVWIGGSILASLSTFQQMWISKQEYDESGPSIVHRKCF</sequence>
<organism>
    <name type="scientific">Xenopus laevis</name>
    <name type="common">African clawed frog</name>
    <dbReference type="NCBI Taxonomy" id="8355"/>
    <lineage>
        <taxon>Eukaryota</taxon>
        <taxon>Metazoa</taxon>
        <taxon>Chordata</taxon>
        <taxon>Craniata</taxon>
        <taxon>Vertebrata</taxon>
        <taxon>Euteleostomi</taxon>
        <taxon>Amphibia</taxon>
        <taxon>Batrachia</taxon>
        <taxon>Anura</taxon>
        <taxon>Pipoidea</taxon>
        <taxon>Pipidae</taxon>
        <taxon>Xenopodinae</taxon>
        <taxon>Xenopus</taxon>
        <taxon>Xenopus</taxon>
    </lineage>
</organism>
<dbReference type="EC" id="3.6.4.-" evidence="2"/>
<dbReference type="EMBL" id="M24770">
    <property type="protein sequence ID" value="AAA49639.1"/>
    <property type="molecule type" value="Genomic_DNA"/>
</dbReference>
<dbReference type="SMR" id="P53506"/>
<dbReference type="AGR" id="Xenbase:XB-GENE-866078"/>
<dbReference type="Xenbase" id="XB-GENE-866078">
    <property type="gene designation" value="actg1.L"/>
</dbReference>
<dbReference type="Proteomes" id="UP000186698">
    <property type="component" value="Unplaced"/>
</dbReference>
<dbReference type="GO" id="GO:0015629">
    <property type="term" value="C:actin cytoskeleton"/>
    <property type="evidence" value="ECO:0000318"/>
    <property type="project" value="GO_Central"/>
</dbReference>
<dbReference type="GO" id="GO:0005884">
    <property type="term" value="C:actin filament"/>
    <property type="evidence" value="ECO:0000318"/>
    <property type="project" value="GO_Central"/>
</dbReference>
<dbReference type="GO" id="GO:0030424">
    <property type="term" value="C:axon"/>
    <property type="evidence" value="ECO:0000318"/>
    <property type="project" value="GO_Central"/>
</dbReference>
<dbReference type="GO" id="GO:0005737">
    <property type="term" value="C:cytoplasm"/>
    <property type="evidence" value="ECO:0000318"/>
    <property type="project" value="GO_Central"/>
</dbReference>
<dbReference type="GO" id="GO:0016020">
    <property type="term" value="C:membrane"/>
    <property type="evidence" value="ECO:0000318"/>
    <property type="project" value="GO_Central"/>
</dbReference>
<dbReference type="GO" id="GO:0035267">
    <property type="term" value="C:NuA4 histone acetyltransferase complex"/>
    <property type="evidence" value="ECO:0000318"/>
    <property type="project" value="GO_Central"/>
</dbReference>
<dbReference type="GO" id="GO:0045202">
    <property type="term" value="C:synapse"/>
    <property type="evidence" value="ECO:0000318"/>
    <property type="project" value="GO_Central"/>
</dbReference>
<dbReference type="GO" id="GO:0005524">
    <property type="term" value="F:ATP binding"/>
    <property type="evidence" value="ECO:0007669"/>
    <property type="project" value="UniProtKB-KW"/>
</dbReference>
<dbReference type="GO" id="GO:0016787">
    <property type="term" value="F:hydrolase activity"/>
    <property type="evidence" value="ECO:0007669"/>
    <property type="project" value="UniProtKB-KW"/>
</dbReference>
<dbReference type="GO" id="GO:0019901">
    <property type="term" value="F:protein kinase binding"/>
    <property type="evidence" value="ECO:0000318"/>
    <property type="project" value="GO_Central"/>
</dbReference>
<dbReference type="GO" id="GO:0098973">
    <property type="term" value="F:structural constituent of postsynaptic actin cytoskeleton"/>
    <property type="evidence" value="ECO:0000318"/>
    <property type="project" value="GO_Central"/>
</dbReference>
<dbReference type="GO" id="GO:0007409">
    <property type="term" value="P:axonogenesis"/>
    <property type="evidence" value="ECO:0000318"/>
    <property type="project" value="GO_Central"/>
</dbReference>
<dbReference type="GO" id="GO:0048870">
    <property type="term" value="P:cell motility"/>
    <property type="evidence" value="ECO:0000318"/>
    <property type="project" value="GO_Central"/>
</dbReference>
<dbReference type="CDD" id="cd10224">
    <property type="entry name" value="ASKHA_NBD_actin"/>
    <property type="match status" value="1"/>
</dbReference>
<dbReference type="FunFam" id="2.30.36.70:FF:000001">
    <property type="entry name" value="Actin, alpha skeletal muscle"/>
    <property type="match status" value="1"/>
</dbReference>
<dbReference type="FunFam" id="3.30.420.40:FF:000131">
    <property type="entry name" value="Actin, alpha skeletal muscle"/>
    <property type="match status" value="1"/>
</dbReference>
<dbReference type="FunFam" id="3.30.420.40:FF:000291">
    <property type="entry name" value="Actin, alpha skeletal muscle"/>
    <property type="match status" value="1"/>
</dbReference>
<dbReference type="FunFam" id="3.90.640.10:FF:000047">
    <property type="entry name" value="Actin, alpha skeletal muscle"/>
    <property type="match status" value="1"/>
</dbReference>
<dbReference type="FunFam" id="3.30.420.40:FF:000058">
    <property type="entry name" value="Putative actin-related protein 5"/>
    <property type="match status" value="1"/>
</dbReference>
<dbReference type="Gene3D" id="3.30.420.40">
    <property type="match status" value="2"/>
</dbReference>
<dbReference type="Gene3D" id="3.90.640.10">
    <property type="entry name" value="Actin, Chain A, domain 4"/>
    <property type="match status" value="1"/>
</dbReference>
<dbReference type="InterPro" id="IPR004000">
    <property type="entry name" value="Actin"/>
</dbReference>
<dbReference type="InterPro" id="IPR020902">
    <property type="entry name" value="Actin/actin-like_CS"/>
</dbReference>
<dbReference type="InterPro" id="IPR004001">
    <property type="entry name" value="Actin_CS"/>
</dbReference>
<dbReference type="InterPro" id="IPR043129">
    <property type="entry name" value="ATPase_NBD"/>
</dbReference>
<dbReference type="PANTHER" id="PTHR11937">
    <property type="entry name" value="ACTIN"/>
    <property type="match status" value="1"/>
</dbReference>
<dbReference type="Pfam" id="PF00022">
    <property type="entry name" value="Actin"/>
    <property type="match status" value="1"/>
</dbReference>
<dbReference type="PRINTS" id="PR00190">
    <property type="entry name" value="ACTIN"/>
</dbReference>
<dbReference type="SMART" id="SM00268">
    <property type="entry name" value="ACTIN"/>
    <property type="match status" value="1"/>
</dbReference>
<dbReference type="SUPFAM" id="SSF53067">
    <property type="entry name" value="Actin-like ATPase domain"/>
    <property type="match status" value="2"/>
</dbReference>
<dbReference type="PROSITE" id="PS00406">
    <property type="entry name" value="ACTINS_1"/>
    <property type="match status" value="1"/>
</dbReference>
<dbReference type="PROSITE" id="PS00432">
    <property type="entry name" value="ACTINS_2"/>
    <property type="match status" value="1"/>
</dbReference>
<dbReference type="PROSITE" id="PS01132">
    <property type="entry name" value="ACTINS_ACT_LIKE"/>
    <property type="match status" value="1"/>
</dbReference>
<reference key="1">
    <citation type="journal article" date="1987" name="Development">
        <title>An amphibian cytoskeletal-type actin gene is expressed exclusively in muscle tissue.</title>
        <authorList>
            <person name="Mohun T.J."/>
            <person name="Garrett N."/>
        </authorList>
    </citation>
    <scope>NUCLEOTIDE SEQUENCE [GENOMIC DNA]</scope>
</reference>
<keyword id="KW-0067">ATP-binding</keyword>
<keyword id="KW-0963">Cytoplasm</keyword>
<keyword id="KW-0206">Cytoskeleton</keyword>
<keyword id="KW-0378">Hydrolase</keyword>
<keyword id="KW-0547">Nucleotide-binding</keyword>
<keyword id="KW-0558">Oxidation</keyword>
<keyword id="KW-1185">Reference proteome</keyword>
<feature type="chain" id="PRO_0000089054" description="Actin, cytoplasmic type 8">
    <location>
        <begin position="1"/>
        <end position="376"/>
    </location>
</feature>
<feature type="modified residue" description="Methionine (R)-sulfoxide" evidence="1">
    <location>
        <position position="45"/>
    </location>
</feature>
<feature type="modified residue" description="Methionine (R)-sulfoxide" evidence="1">
    <location>
        <position position="48"/>
    </location>
</feature>
<protein>
    <recommendedName>
        <fullName>Actin, cytoplasmic type 8</fullName>
        <ecNumber evidence="2">3.6.4.-</ecNumber>
    </recommendedName>
</protein>
<accession>P53506</accession>
<comment type="function">
    <text>Actins are highly conserved proteins that are involved in various types of cell motility and are ubiquitously expressed in all eukaryotic cells.</text>
</comment>
<comment type="catalytic activity">
    <reaction evidence="2">
        <text>ATP + H2O = ADP + phosphate + H(+)</text>
        <dbReference type="Rhea" id="RHEA:13065"/>
        <dbReference type="ChEBI" id="CHEBI:15377"/>
        <dbReference type="ChEBI" id="CHEBI:15378"/>
        <dbReference type="ChEBI" id="CHEBI:30616"/>
        <dbReference type="ChEBI" id="CHEBI:43474"/>
        <dbReference type="ChEBI" id="CHEBI:456216"/>
    </reaction>
</comment>
<comment type="subunit">
    <text>Polymerization of globular actin (G-actin) leads to a structural filament (F-actin) in the form of a two-stranded helix. Each actin can bind to 4 others.</text>
</comment>
<comment type="subcellular location">
    <subcellularLocation>
        <location>Cytoplasm</location>
        <location>Cytoskeleton</location>
    </subcellularLocation>
</comment>
<comment type="PTM">
    <text evidence="1">Oxidation of Met-45 and Met-48 by MICALs (mical1, mical2 or mical3) to form methionine sulfoxide promotes actin filament depolymerization. Mical1 and mical2 produce the (R)-S-oxide form. The (R)-S-oxide form is reverted by msrb1 and msrb2, which promote actin repolymerization (By similarity).</text>
</comment>
<comment type="similarity">
    <text evidence="3">Belongs to the actin family.</text>
</comment>